<name>DEF_LATSS</name>
<feature type="chain" id="PRO_0000301048" description="Peptide deformylase">
    <location>
        <begin position="1"/>
        <end position="185"/>
    </location>
</feature>
<feature type="active site" evidence="1">
    <location>
        <position position="156"/>
    </location>
</feature>
<feature type="binding site" evidence="1">
    <location>
        <position position="112"/>
    </location>
    <ligand>
        <name>Fe cation</name>
        <dbReference type="ChEBI" id="CHEBI:24875"/>
    </ligand>
</feature>
<feature type="binding site" evidence="1">
    <location>
        <position position="155"/>
    </location>
    <ligand>
        <name>Fe cation</name>
        <dbReference type="ChEBI" id="CHEBI:24875"/>
    </ligand>
</feature>
<feature type="binding site" evidence="1">
    <location>
        <position position="159"/>
    </location>
    <ligand>
        <name>Fe cation</name>
        <dbReference type="ChEBI" id="CHEBI:24875"/>
    </ligand>
</feature>
<dbReference type="EC" id="3.5.1.88" evidence="1"/>
<dbReference type="EMBL" id="CR936503">
    <property type="protein sequence ID" value="CAI55388.1"/>
    <property type="molecule type" value="Genomic_DNA"/>
</dbReference>
<dbReference type="RefSeq" id="WP_011374787.1">
    <property type="nucleotide sequence ID" value="NC_007576.1"/>
</dbReference>
<dbReference type="SMR" id="Q38WP3"/>
<dbReference type="STRING" id="314315.LCA_1087"/>
<dbReference type="GeneID" id="57133943"/>
<dbReference type="KEGG" id="lsa:LCA_1087"/>
<dbReference type="eggNOG" id="COG0242">
    <property type="taxonomic scope" value="Bacteria"/>
</dbReference>
<dbReference type="HOGENOM" id="CLU_061901_4_0_9"/>
<dbReference type="OrthoDB" id="9784988at2"/>
<dbReference type="Proteomes" id="UP000002707">
    <property type="component" value="Chromosome"/>
</dbReference>
<dbReference type="GO" id="GO:0046872">
    <property type="term" value="F:metal ion binding"/>
    <property type="evidence" value="ECO:0007669"/>
    <property type="project" value="UniProtKB-KW"/>
</dbReference>
<dbReference type="GO" id="GO:0042586">
    <property type="term" value="F:peptide deformylase activity"/>
    <property type="evidence" value="ECO:0007669"/>
    <property type="project" value="UniProtKB-UniRule"/>
</dbReference>
<dbReference type="GO" id="GO:0043686">
    <property type="term" value="P:co-translational protein modification"/>
    <property type="evidence" value="ECO:0007669"/>
    <property type="project" value="TreeGrafter"/>
</dbReference>
<dbReference type="GO" id="GO:0006412">
    <property type="term" value="P:translation"/>
    <property type="evidence" value="ECO:0007669"/>
    <property type="project" value="UniProtKB-UniRule"/>
</dbReference>
<dbReference type="CDD" id="cd00487">
    <property type="entry name" value="Pep_deformylase"/>
    <property type="match status" value="1"/>
</dbReference>
<dbReference type="FunFam" id="3.90.45.10:FF:000002">
    <property type="entry name" value="Peptide deformylase"/>
    <property type="match status" value="1"/>
</dbReference>
<dbReference type="Gene3D" id="3.90.45.10">
    <property type="entry name" value="Peptide deformylase"/>
    <property type="match status" value="1"/>
</dbReference>
<dbReference type="HAMAP" id="MF_00163">
    <property type="entry name" value="Pep_deformylase"/>
    <property type="match status" value="1"/>
</dbReference>
<dbReference type="InterPro" id="IPR023635">
    <property type="entry name" value="Peptide_deformylase"/>
</dbReference>
<dbReference type="InterPro" id="IPR036821">
    <property type="entry name" value="Peptide_deformylase_sf"/>
</dbReference>
<dbReference type="NCBIfam" id="TIGR00079">
    <property type="entry name" value="pept_deformyl"/>
    <property type="match status" value="1"/>
</dbReference>
<dbReference type="PANTHER" id="PTHR10458">
    <property type="entry name" value="PEPTIDE DEFORMYLASE"/>
    <property type="match status" value="1"/>
</dbReference>
<dbReference type="PANTHER" id="PTHR10458:SF8">
    <property type="entry name" value="PEPTIDE DEFORMYLASE 2"/>
    <property type="match status" value="1"/>
</dbReference>
<dbReference type="Pfam" id="PF01327">
    <property type="entry name" value="Pep_deformylase"/>
    <property type="match status" value="1"/>
</dbReference>
<dbReference type="PIRSF" id="PIRSF004749">
    <property type="entry name" value="Pep_def"/>
    <property type="match status" value="1"/>
</dbReference>
<dbReference type="PRINTS" id="PR01576">
    <property type="entry name" value="PDEFORMYLASE"/>
</dbReference>
<dbReference type="SUPFAM" id="SSF56420">
    <property type="entry name" value="Peptide deformylase"/>
    <property type="match status" value="1"/>
</dbReference>
<accession>Q38WP3</accession>
<gene>
    <name evidence="1" type="primary">def</name>
    <name type="ordered locus">LCA_1087</name>
</gene>
<proteinExistence type="inferred from homology"/>
<protein>
    <recommendedName>
        <fullName evidence="1">Peptide deformylase</fullName>
        <shortName evidence="1">PDF</shortName>
        <ecNumber evidence="1">3.5.1.88</ecNumber>
    </recommendedName>
    <alternativeName>
        <fullName evidence="1">Polypeptide deformylase</fullName>
    </alternativeName>
</protein>
<keyword id="KW-0378">Hydrolase</keyword>
<keyword id="KW-0408">Iron</keyword>
<keyword id="KW-0479">Metal-binding</keyword>
<keyword id="KW-0648">Protein biosynthesis</keyword>
<keyword id="KW-1185">Reference proteome</keyword>
<evidence type="ECO:0000255" key="1">
    <source>
        <dbReference type="HAMAP-Rule" id="MF_00163"/>
    </source>
</evidence>
<reference key="1">
    <citation type="journal article" date="2005" name="Nat. Biotechnol.">
        <title>The complete genome sequence of the meat-borne lactic acid bacterium Lactobacillus sakei 23K.</title>
        <authorList>
            <person name="Chaillou S."/>
            <person name="Champomier-Verges M.-C."/>
            <person name="Cornet M."/>
            <person name="Crutz-Le Coq A.-M."/>
            <person name="Dudez A.-M."/>
            <person name="Martin V."/>
            <person name="Beaufils S."/>
            <person name="Darbon-Rongere E."/>
            <person name="Bossy R."/>
            <person name="Loux V."/>
            <person name="Zagorec M."/>
        </authorList>
    </citation>
    <scope>NUCLEOTIDE SEQUENCE [LARGE SCALE GENOMIC DNA]</scope>
    <source>
        <strain>23K</strain>
    </source>
</reference>
<organism>
    <name type="scientific">Latilactobacillus sakei subsp. sakei (strain 23K)</name>
    <name type="common">Lactobacillus sakei subsp. sakei</name>
    <dbReference type="NCBI Taxonomy" id="314315"/>
    <lineage>
        <taxon>Bacteria</taxon>
        <taxon>Bacillati</taxon>
        <taxon>Bacillota</taxon>
        <taxon>Bacilli</taxon>
        <taxon>Lactobacillales</taxon>
        <taxon>Lactobacillaceae</taxon>
        <taxon>Latilactobacillus</taxon>
    </lineage>
</organism>
<comment type="function">
    <text evidence="1">Removes the formyl group from the N-terminal Met of newly synthesized proteins. Requires at least a dipeptide for an efficient rate of reaction. N-terminal L-methionine is a prerequisite for activity but the enzyme has broad specificity at other positions.</text>
</comment>
<comment type="catalytic activity">
    <reaction evidence="1">
        <text>N-terminal N-formyl-L-methionyl-[peptide] + H2O = N-terminal L-methionyl-[peptide] + formate</text>
        <dbReference type="Rhea" id="RHEA:24420"/>
        <dbReference type="Rhea" id="RHEA-COMP:10639"/>
        <dbReference type="Rhea" id="RHEA-COMP:10640"/>
        <dbReference type="ChEBI" id="CHEBI:15377"/>
        <dbReference type="ChEBI" id="CHEBI:15740"/>
        <dbReference type="ChEBI" id="CHEBI:49298"/>
        <dbReference type="ChEBI" id="CHEBI:64731"/>
        <dbReference type="EC" id="3.5.1.88"/>
    </reaction>
</comment>
<comment type="cofactor">
    <cofactor evidence="1">
        <name>Fe(2+)</name>
        <dbReference type="ChEBI" id="CHEBI:29033"/>
    </cofactor>
    <text evidence="1">Binds 1 Fe(2+) ion.</text>
</comment>
<comment type="similarity">
    <text evidence="1">Belongs to the polypeptide deformylase family.</text>
</comment>
<sequence>MILMKDIIREGNPTLREIAQPVSFPLSDEDRQLAADMMTFLENSQDPEIAAKYQLRAGVGLAAPQVDVSKQMSAVLVPGPEGEAPILKDVIINPKIISHSVQDAALAEGEGCLSVDREVPGYVPRHDRITLRYQDVEGVSHKIRLKNYPAIVCQHEIDHLNGILFFDHINKENPFAAPDDMIILE</sequence>